<organism>
    <name type="scientific">Shewanella sp. (strain ANA-3)</name>
    <dbReference type="NCBI Taxonomy" id="94122"/>
    <lineage>
        <taxon>Bacteria</taxon>
        <taxon>Pseudomonadati</taxon>
        <taxon>Pseudomonadota</taxon>
        <taxon>Gammaproteobacteria</taxon>
        <taxon>Alteromonadales</taxon>
        <taxon>Shewanellaceae</taxon>
        <taxon>Shewanella</taxon>
    </lineage>
</organism>
<protein>
    <recommendedName>
        <fullName evidence="1">Acetate kinase</fullName>
        <ecNumber evidence="1">2.7.2.1</ecNumber>
    </recommendedName>
    <alternativeName>
        <fullName evidence="1">Acetokinase</fullName>
    </alternativeName>
</protein>
<comment type="function">
    <text evidence="1">Catalyzes the formation of acetyl phosphate from acetate and ATP. Can also catalyze the reverse reaction.</text>
</comment>
<comment type="catalytic activity">
    <reaction evidence="1">
        <text>acetate + ATP = acetyl phosphate + ADP</text>
        <dbReference type="Rhea" id="RHEA:11352"/>
        <dbReference type="ChEBI" id="CHEBI:22191"/>
        <dbReference type="ChEBI" id="CHEBI:30089"/>
        <dbReference type="ChEBI" id="CHEBI:30616"/>
        <dbReference type="ChEBI" id="CHEBI:456216"/>
        <dbReference type="EC" id="2.7.2.1"/>
    </reaction>
</comment>
<comment type="cofactor">
    <cofactor evidence="1">
        <name>Mg(2+)</name>
        <dbReference type="ChEBI" id="CHEBI:18420"/>
    </cofactor>
    <cofactor evidence="1">
        <name>Mn(2+)</name>
        <dbReference type="ChEBI" id="CHEBI:29035"/>
    </cofactor>
    <text evidence="1">Mg(2+). Can also accept Mn(2+).</text>
</comment>
<comment type="pathway">
    <text evidence="1">Metabolic intermediate biosynthesis; acetyl-CoA biosynthesis; acetyl-CoA from acetate: step 1/2.</text>
</comment>
<comment type="subunit">
    <text evidence="1">Homodimer.</text>
</comment>
<comment type="subcellular location">
    <subcellularLocation>
        <location evidence="1">Cytoplasm</location>
    </subcellularLocation>
</comment>
<comment type="similarity">
    <text evidence="1">Belongs to the acetokinase family.</text>
</comment>
<sequence length="399" mass="43581">MSNKLVLVLNCGSSSLKFAVIDAQTGDDQISGLAECFGLEDSRIKWKINGEKHESSLGAFTAHREAVEFIVNKILAGQPELAAQIQAVGHRIVHGGEKFTRSVIIDEHVIKGIEECSSLAPLHNPAHLIGIRAAIASFPKLPQVAVFDTAFHQSMPERAYIYALPYKLYREHGIRRYGMHGTSHLFVSREAAKVLNKPLEETNVICAHLGNGASVTAVKGGKSVDTSMGLTPLEGLVMGTRCGDLDPSIIYHLVHQLGYTLEEVNNLMNKQSGLLGISELTNDCRGIEEGYADGHKGATLALEIFCYRLAKYIASYTVPLGRLDAVVFTGGIGENSDIIREKVLNMLQIFNFHVDSERNKAARFGKKGIITTDNSTVAMVIPTNEEWVIAEDSIKLITK</sequence>
<proteinExistence type="inferred from homology"/>
<evidence type="ECO:0000255" key="1">
    <source>
        <dbReference type="HAMAP-Rule" id="MF_00020"/>
    </source>
</evidence>
<gene>
    <name evidence="1" type="primary">ackA</name>
    <name type="ordered locus">Shewana3_1552</name>
</gene>
<keyword id="KW-0067">ATP-binding</keyword>
<keyword id="KW-0963">Cytoplasm</keyword>
<keyword id="KW-0418">Kinase</keyword>
<keyword id="KW-0460">Magnesium</keyword>
<keyword id="KW-0479">Metal-binding</keyword>
<keyword id="KW-0547">Nucleotide-binding</keyword>
<keyword id="KW-0808">Transferase</keyword>
<reference key="1">
    <citation type="submission" date="2006-09" db="EMBL/GenBank/DDBJ databases">
        <title>Complete sequence of chromosome 1 of Shewanella sp. ANA-3.</title>
        <authorList>
            <person name="Copeland A."/>
            <person name="Lucas S."/>
            <person name="Lapidus A."/>
            <person name="Barry K."/>
            <person name="Detter J.C."/>
            <person name="Glavina del Rio T."/>
            <person name="Hammon N."/>
            <person name="Israni S."/>
            <person name="Dalin E."/>
            <person name="Tice H."/>
            <person name="Pitluck S."/>
            <person name="Chertkov O."/>
            <person name="Brettin T."/>
            <person name="Bruce D."/>
            <person name="Han C."/>
            <person name="Tapia R."/>
            <person name="Gilna P."/>
            <person name="Schmutz J."/>
            <person name="Larimer F."/>
            <person name="Land M."/>
            <person name="Hauser L."/>
            <person name="Kyrpides N."/>
            <person name="Kim E."/>
            <person name="Newman D."/>
            <person name="Salticov C."/>
            <person name="Konstantinidis K."/>
            <person name="Klappenback J."/>
            <person name="Tiedje J."/>
            <person name="Richardson P."/>
        </authorList>
    </citation>
    <scope>NUCLEOTIDE SEQUENCE [LARGE SCALE GENOMIC DNA]</scope>
    <source>
        <strain>ANA-3</strain>
    </source>
</reference>
<feature type="chain" id="PRO_1000002257" description="Acetate kinase">
    <location>
        <begin position="1"/>
        <end position="399"/>
    </location>
</feature>
<feature type="active site" description="Proton donor/acceptor" evidence="1">
    <location>
        <position position="148"/>
    </location>
</feature>
<feature type="binding site" evidence="1">
    <location>
        <position position="10"/>
    </location>
    <ligand>
        <name>Mg(2+)</name>
        <dbReference type="ChEBI" id="CHEBI:18420"/>
    </ligand>
</feature>
<feature type="binding site" evidence="1">
    <location>
        <position position="17"/>
    </location>
    <ligand>
        <name>ATP</name>
        <dbReference type="ChEBI" id="CHEBI:30616"/>
    </ligand>
</feature>
<feature type="binding site" evidence="1">
    <location>
        <position position="91"/>
    </location>
    <ligand>
        <name>substrate</name>
    </ligand>
</feature>
<feature type="binding site" evidence="1">
    <location>
        <begin position="208"/>
        <end position="212"/>
    </location>
    <ligand>
        <name>ATP</name>
        <dbReference type="ChEBI" id="CHEBI:30616"/>
    </ligand>
</feature>
<feature type="binding site" evidence="1">
    <location>
        <begin position="283"/>
        <end position="285"/>
    </location>
    <ligand>
        <name>ATP</name>
        <dbReference type="ChEBI" id="CHEBI:30616"/>
    </ligand>
</feature>
<feature type="binding site" evidence="1">
    <location>
        <begin position="331"/>
        <end position="335"/>
    </location>
    <ligand>
        <name>ATP</name>
        <dbReference type="ChEBI" id="CHEBI:30616"/>
    </ligand>
</feature>
<feature type="binding site" evidence="1">
    <location>
        <position position="385"/>
    </location>
    <ligand>
        <name>Mg(2+)</name>
        <dbReference type="ChEBI" id="CHEBI:18420"/>
    </ligand>
</feature>
<feature type="site" description="Transition state stabilizer" evidence="1">
    <location>
        <position position="180"/>
    </location>
</feature>
<feature type="site" description="Transition state stabilizer" evidence="1">
    <location>
        <position position="241"/>
    </location>
</feature>
<accession>A0KVG7</accession>
<name>ACKA_SHESA</name>
<dbReference type="EC" id="2.7.2.1" evidence="1"/>
<dbReference type="EMBL" id="CP000469">
    <property type="protein sequence ID" value="ABK47786.1"/>
    <property type="molecule type" value="Genomic_DNA"/>
</dbReference>
<dbReference type="RefSeq" id="WP_011716599.1">
    <property type="nucleotide sequence ID" value="NC_008577.1"/>
</dbReference>
<dbReference type="SMR" id="A0KVG7"/>
<dbReference type="STRING" id="94122.Shewana3_1552"/>
<dbReference type="KEGG" id="shn:Shewana3_1552"/>
<dbReference type="eggNOG" id="COG0282">
    <property type="taxonomic scope" value="Bacteria"/>
</dbReference>
<dbReference type="HOGENOM" id="CLU_020352_0_1_6"/>
<dbReference type="OrthoDB" id="9802453at2"/>
<dbReference type="UniPathway" id="UPA00340">
    <property type="reaction ID" value="UER00458"/>
</dbReference>
<dbReference type="Proteomes" id="UP000002589">
    <property type="component" value="Chromosome"/>
</dbReference>
<dbReference type="GO" id="GO:0005829">
    <property type="term" value="C:cytosol"/>
    <property type="evidence" value="ECO:0007669"/>
    <property type="project" value="TreeGrafter"/>
</dbReference>
<dbReference type="GO" id="GO:0008776">
    <property type="term" value="F:acetate kinase activity"/>
    <property type="evidence" value="ECO:0007669"/>
    <property type="project" value="UniProtKB-UniRule"/>
</dbReference>
<dbReference type="GO" id="GO:0005524">
    <property type="term" value="F:ATP binding"/>
    <property type="evidence" value="ECO:0007669"/>
    <property type="project" value="UniProtKB-KW"/>
</dbReference>
<dbReference type="GO" id="GO:0000287">
    <property type="term" value="F:magnesium ion binding"/>
    <property type="evidence" value="ECO:0007669"/>
    <property type="project" value="UniProtKB-UniRule"/>
</dbReference>
<dbReference type="GO" id="GO:0006083">
    <property type="term" value="P:acetate metabolic process"/>
    <property type="evidence" value="ECO:0007669"/>
    <property type="project" value="TreeGrafter"/>
</dbReference>
<dbReference type="GO" id="GO:0006085">
    <property type="term" value="P:acetyl-CoA biosynthetic process"/>
    <property type="evidence" value="ECO:0007669"/>
    <property type="project" value="UniProtKB-UniRule"/>
</dbReference>
<dbReference type="CDD" id="cd24010">
    <property type="entry name" value="ASKHA_NBD_AcK_PK"/>
    <property type="match status" value="1"/>
</dbReference>
<dbReference type="FunFam" id="3.30.420.40:FF:000041">
    <property type="entry name" value="Acetate kinase"/>
    <property type="match status" value="1"/>
</dbReference>
<dbReference type="Gene3D" id="3.30.420.40">
    <property type="match status" value="2"/>
</dbReference>
<dbReference type="HAMAP" id="MF_00020">
    <property type="entry name" value="Acetate_kinase"/>
    <property type="match status" value="1"/>
</dbReference>
<dbReference type="InterPro" id="IPR004372">
    <property type="entry name" value="Ac/propionate_kinase"/>
</dbReference>
<dbReference type="InterPro" id="IPR000890">
    <property type="entry name" value="Aliphatic_acid_kin_short-chain"/>
</dbReference>
<dbReference type="InterPro" id="IPR023865">
    <property type="entry name" value="Aliphatic_acid_kinase_CS"/>
</dbReference>
<dbReference type="InterPro" id="IPR043129">
    <property type="entry name" value="ATPase_NBD"/>
</dbReference>
<dbReference type="NCBIfam" id="TIGR00016">
    <property type="entry name" value="ackA"/>
    <property type="match status" value="1"/>
</dbReference>
<dbReference type="PANTHER" id="PTHR21060">
    <property type="entry name" value="ACETATE KINASE"/>
    <property type="match status" value="1"/>
</dbReference>
<dbReference type="PANTHER" id="PTHR21060:SF21">
    <property type="entry name" value="ACETATE KINASE"/>
    <property type="match status" value="1"/>
</dbReference>
<dbReference type="Pfam" id="PF00871">
    <property type="entry name" value="Acetate_kinase"/>
    <property type="match status" value="1"/>
</dbReference>
<dbReference type="PIRSF" id="PIRSF000722">
    <property type="entry name" value="Acetate_prop_kin"/>
    <property type="match status" value="1"/>
</dbReference>
<dbReference type="PRINTS" id="PR00471">
    <property type="entry name" value="ACETATEKNASE"/>
</dbReference>
<dbReference type="SUPFAM" id="SSF53067">
    <property type="entry name" value="Actin-like ATPase domain"/>
    <property type="match status" value="2"/>
</dbReference>
<dbReference type="PROSITE" id="PS01075">
    <property type="entry name" value="ACETATE_KINASE_1"/>
    <property type="match status" value="1"/>
</dbReference>
<dbReference type="PROSITE" id="PS01076">
    <property type="entry name" value="ACETATE_KINASE_2"/>
    <property type="match status" value="1"/>
</dbReference>